<keyword id="KW-0963">Cytoplasm</keyword>
<keyword id="KW-0235">DNA replication</keyword>
<keyword id="KW-0239">DNA-directed DNA polymerase</keyword>
<keyword id="KW-0269">Exonuclease</keyword>
<keyword id="KW-0378">Hydrolase</keyword>
<keyword id="KW-0540">Nuclease</keyword>
<keyword id="KW-0548">Nucleotidyltransferase</keyword>
<keyword id="KW-0808">Transferase</keyword>
<dbReference type="EC" id="2.7.7.7" evidence="1"/>
<dbReference type="EMBL" id="BA000018">
    <property type="protein sequence ID" value="BAB42359.1"/>
    <property type="molecule type" value="Genomic_DNA"/>
</dbReference>
<dbReference type="PIR" id="C89900">
    <property type="entry name" value="C89900"/>
</dbReference>
<dbReference type="SMR" id="P63982"/>
<dbReference type="EnsemblBacteria" id="BAB42359">
    <property type="protein sequence ID" value="BAB42359"/>
    <property type="gene ID" value="BAB42359"/>
</dbReference>
<dbReference type="KEGG" id="sau:SA1107"/>
<dbReference type="HOGENOM" id="CLU_003297_2_0_9"/>
<dbReference type="GO" id="GO:0005737">
    <property type="term" value="C:cytoplasm"/>
    <property type="evidence" value="ECO:0007669"/>
    <property type="project" value="UniProtKB-SubCell"/>
</dbReference>
<dbReference type="GO" id="GO:0008408">
    <property type="term" value="F:3'-5' exonuclease activity"/>
    <property type="evidence" value="ECO:0007669"/>
    <property type="project" value="UniProtKB-UniRule"/>
</dbReference>
<dbReference type="GO" id="GO:0003677">
    <property type="term" value="F:DNA binding"/>
    <property type="evidence" value="ECO:0007669"/>
    <property type="project" value="UniProtKB-UniRule"/>
</dbReference>
<dbReference type="GO" id="GO:0003887">
    <property type="term" value="F:DNA-directed DNA polymerase activity"/>
    <property type="evidence" value="ECO:0007669"/>
    <property type="project" value="UniProtKB-UniRule"/>
</dbReference>
<dbReference type="GO" id="GO:0006261">
    <property type="term" value="P:DNA-templated DNA replication"/>
    <property type="evidence" value="ECO:0007669"/>
    <property type="project" value="UniProtKB-UniRule"/>
</dbReference>
<dbReference type="CDD" id="cd06127">
    <property type="entry name" value="DEDDh"/>
    <property type="match status" value="1"/>
</dbReference>
<dbReference type="CDD" id="cd07435">
    <property type="entry name" value="PHP_PolIIIA_POLC"/>
    <property type="match status" value="1"/>
</dbReference>
<dbReference type="CDD" id="cd04484">
    <property type="entry name" value="polC_OBF"/>
    <property type="match status" value="1"/>
</dbReference>
<dbReference type="FunFam" id="3.30.420.10:FF:000045">
    <property type="entry name" value="3'-5' exonuclease DinG"/>
    <property type="match status" value="1"/>
</dbReference>
<dbReference type="Gene3D" id="1.10.150.870">
    <property type="match status" value="1"/>
</dbReference>
<dbReference type="Gene3D" id="3.30.1900.20">
    <property type="match status" value="2"/>
</dbReference>
<dbReference type="Gene3D" id="6.10.140.1510">
    <property type="match status" value="1"/>
</dbReference>
<dbReference type="Gene3D" id="3.20.20.140">
    <property type="entry name" value="Metal-dependent hydrolases"/>
    <property type="match status" value="1"/>
</dbReference>
<dbReference type="Gene3D" id="2.40.50.140">
    <property type="entry name" value="Nucleic acid-binding proteins"/>
    <property type="match status" value="1"/>
</dbReference>
<dbReference type="Gene3D" id="1.10.150.700">
    <property type="entry name" value="PolC, middle finger domain"/>
    <property type="match status" value="1"/>
</dbReference>
<dbReference type="Gene3D" id="3.30.420.10">
    <property type="entry name" value="Ribonuclease H-like superfamily/Ribonuclease H"/>
    <property type="match status" value="1"/>
</dbReference>
<dbReference type="HAMAP" id="MF_00356">
    <property type="entry name" value="DNApol_PolC"/>
    <property type="match status" value="1"/>
</dbReference>
<dbReference type="InterPro" id="IPR011708">
    <property type="entry name" value="DNA_pol3_alpha_NTPase_dom"/>
</dbReference>
<dbReference type="InterPro" id="IPR040982">
    <property type="entry name" value="DNA_pol3_finger"/>
</dbReference>
<dbReference type="InterPro" id="IPR024754">
    <property type="entry name" value="DNA_PolC-like_N_II"/>
</dbReference>
<dbReference type="InterPro" id="IPR028112">
    <property type="entry name" value="DNA_PolC-type_N_I"/>
</dbReference>
<dbReference type="InterPro" id="IPR004805">
    <property type="entry name" value="DnaE2/DnaE/PolC"/>
</dbReference>
<dbReference type="InterPro" id="IPR029460">
    <property type="entry name" value="DNAPol_HHH"/>
</dbReference>
<dbReference type="InterPro" id="IPR006054">
    <property type="entry name" value="DnaQ"/>
</dbReference>
<dbReference type="InterPro" id="IPR013520">
    <property type="entry name" value="Exonuclease_RNaseT/DNA_pol3"/>
</dbReference>
<dbReference type="InterPro" id="IPR012340">
    <property type="entry name" value="NA-bd_OB-fold"/>
</dbReference>
<dbReference type="InterPro" id="IPR004013">
    <property type="entry name" value="PHP_dom"/>
</dbReference>
<dbReference type="InterPro" id="IPR003141">
    <property type="entry name" value="Pol/His_phosphatase_N"/>
</dbReference>
<dbReference type="InterPro" id="IPR006308">
    <property type="entry name" value="Pol_III_a_PolC-type_gram_pos"/>
</dbReference>
<dbReference type="InterPro" id="IPR044923">
    <property type="entry name" value="PolC_middle_finger_sf"/>
</dbReference>
<dbReference type="InterPro" id="IPR012337">
    <property type="entry name" value="RNaseH-like_sf"/>
</dbReference>
<dbReference type="InterPro" id="IPR036397">
    <property type="entry name" value="RNaseH_sf"/>
</dbReference>
<dbReference type="NCBIfam" id="TIGR00573">
    <property type="entry name" value="dnaq"/>
    <property type="match status" value="1"/>
</dbReference>
<dbReference type="NCBIfam" id="TIGR01405">
    <property type="entry name" value="polC_Gram_pos"/>
    <property type="match status" value="1"/>
</dbReference>
<dbReference type="NCBIfam" id="NF001688">
    <property type="entry name" value="PRK00448.1"/>
    <property type="match status" value="1"/>
</dbReference>
<dbReference type="PANTHER" id="PTHR32294:SF5">
    <property type="entry name" value="DNA POLYMERASE III POLC-TYPE"/>
    <property type="match status" value="1"/>
</dbReference>
<dbReference type="PANTHER" id="PTHR32294">
    <property type="entry name" value="DNA POLYMERASE III SUBUNIT ALPHA"/>
    <property type="match status" value="1"/>
</dbReference>
<dbReference type="Pfam" id="PF14480">
    <property type="entry name" value="DNA_pol3_a_NI"/>
    <property type="match status" value="1"/>
</dbReference>
<dbReference type="Pfam" id="PF11490">
    <property type="entry name" value="DNA_pol3_a_NII"/>
    <property type="match status" value="1"/>
</dbReference>
<dbReference type="Pfam" id="PF07733">
    <property type="entry name" value="DNA_pol3_alpha"/>
    <property type="match status" value="2"/>
</dbReference>
<dbReference type="Pfam" id="PF17657">
    <property type="entry name" value="DNA_pol3_finger"/>
    <property type="match status" value="1"/>
</dbReference>
<dbReference type="Pfam" id="PF14579">
    <property type="entry name" value="HHH_6"/>
    <property type="match status" value="1"/>
</dbReference>
<dbReference type="Pfam" id="PF02811">
    <property type="entry name" value="PHP"/>
    <property type="match status" value="2"/>
</dbReference>
<dbReference type="Pfam" id="PF00929">
    <property type="entry name" value="RNase_T"/>
    <property type="match status" value="1"/>
</dbReference>
<dbReference type="SMART" id="SM00479">
    <property type="entry name" value="EXOIII"/>
    <property type="match status" value="1"/>
</dbReference>
<dbReference type="SMART" id="SM00481">
    <property type="entry name" value="POLIIIAc"/>
    <property type="match status" value="1"/>
</dbReference>
<dbReference type="SUPFAM" id="SSF81585">
    <property type="entry name" value="PsbU/PolX domain-like"/>
    <property type="match status" value="1"/>
</dbReference>
<dbReference type="SUPFAM" id="SSF53098">
    <property type="entry name" value="Ribonuclease H-like"/>
    <property type="match status" value="1"/>
</dbReference>
<proteinExistence type="evidence at protein level"/>
<comment type="function">
    <text evidence="1">Required for replicative DNA synthesis. This DNA polymerase also exhibits 3' to 5' exonuclease activity.</text>
</comment>
<comment type="catalytic activity">
    <reaction evidence="1">
        <text>DNA(n) + a 2'-deoxyribonucleoside 5'-triphosphate = DNA(n+1) + diphosphate</text>
        <dbReference type="Rhea" id="RHEA:22508"/>
        <dbReference type="Rhea" id="RHEA-COMP:17339"/>
        <dbReference type="Rhea" id="RHEA-COMP:17340"/>
        <dbReference type="ChEBI" id="CHEBI:33019"/>
        <dbReference type="ChEBI" id="CHEBI:61560"/>
        <dbReference type="ChEBI" id="CHEBI:173112"/>
        <dbReference type="EC" id="2.7.7.7"/>
    </reaction>
</comment>
<comment type="subcellular location">
    <subcellularLocation>
        <location evidence="1">Cytoplasm</location>
    </subcellularLocation>
</comment>
<comment type="similarity">
    <text evidence="1">Belongs to the DNA polymerase type-C family. PolC subfamily.</text>
</comment>
<protein>
    <recommendedName>
        <fullName evidence="1">DNA polymerase III PolC-type</fullName>
        <shortName evidence="1">PolIII</shortName>
        <ecNumber evidence="1">2.7.7.7</ecNumber>
    </recommendedName>
</protein>
<feature type="chain" id="PRO_0000204588" description="DNA polymerase III PolC-type">
    <location>
        <begin position="1"/>
        <end position="1438"/>
    </location>
</feature>
<feature type="domain" description="Exonuclease">
    <location>
        <begin position="422"/>
        <end position="578"/>
    </location>
</feature>
<gene>
    <name evidence="1" type="primary">polC</name>
    <name type="ordered locus">SA1107</name>
</gene>
<evidence type="ECO:0000255" key="1">
    <source>
        <dbReference type="HAMAP-Rule" id="MF_00356"/>
    </source>
</evidence>
<organism>
    <name type="scientific">Staphylococcus aureus (strain N315)</name>
    <dbReference type="NCBI Taxonomy" id="158879"/>
    <lineage>
        <taxon>Bacteria</taxon>
        <taxon>Bacillati</taxon>
        <taxon>Bacillota</taxon>
        <taxon>Bacilli</taxon>
        <taxon>Bacillales</taxon>
        <taxon>Staphylococcaceae</taxon>
        <taxon>Staphylococcus</taxon>
    </lineage>
</organism>
<sequence length="1438" mass="162693">MAMTEQQKFKVLADQIKISNQLDAEILNSGELTRIDVSNKNRTWEFHITLPQFLAHEDYLLFINAIEQEFKDIANVTCRFTVTNGTNQDEHAIKYFGHCIDQTALSPKVKGQLKQKKLIMSGKVLKVMVSNDIERNHFDKACNGSLIKAFRNCGFDIDKIIFETNDNDQEQNLASLEAHIQEEDEQSARLATEKLEKMKAEKAKQQDNNESAVDKCQIGKPIQIENIKPIESIIEEEFKVAIEGVIFDINLKELKSGRHIVEIKVTDYTDSLVLKMFTRKNKDDLEHFKALSVGKWVRAQGRIEEDTFIRDLVMMMSDIEEIKKATKKDKAEEKRVEFHLHTAMSQMDGIPNIGAYVKQAADWGHPAIAVTDHNVVQAFPDAHAAAEKHGIKMIYGMEGMLVDDGVPIAYKPQDVVLKDATYVVFDVETTGLSNQYDKIIELAAVKVHNGEIIDKFERFSNPHERLSETIINLTHITDDMLVDAPEIEEVLTEFKEWVGDAIFVAHNASFDMGFIDTGYERLGFGPSTNGVIDTLELSRTINTEYGKHGLNFLAKKYGVELTQHHRAIYDTEATAYIFIKMVQQMKELGVLNHNEINKKLSNEDAYKRARPSHVTLIVQNQQGLKNLFKIVSASLVKYFYRTPRIPRSLLDEYREGLLVGTACDEGELFTAVMQKDQSQVEKIAKYYDFIEIQPPALYQDLIDRELIRDTETLHEIYQRLIHAGDTAGIPVIATGNAHYLFEHDGIARKILIASQPGNPLNRSTLPEAHFRTTDEMLNEFHFLGEEKAHEIVVKNTNELADRIERVVPIKDELYTPRMEGANEEIRELSYTNARKLYGEDLPQIVIDRLEKELKSIIGNGFAVIYLISQRLVKKSLDDGYLVGSRGSVGSSFVATMTEITEVNPLPPHYICPNCKTSEFFNDGSVGSGFDLPDKTCETCGAPLIKEGQDIPFETFLGFKGDKVPDIDLNFSGEYQPNAHNYTKVLFGEDKVFRAGTIGTVAEKTAFGYVKGYLNDQGIHKRGAEIDRLVKGCTGVKRTTGQHPGGIIVVPDYMDIYDFTPIQYPADDQNSAWMTTHFDFHSIHDNVLKLDILGHDDPTMIRMLQDLSGIDPKTIPVDDKEVMQIFSTPESLGVTEDEILCKTGTFGVPEFGTGFVRQMLEDTKPTTFSELVQISGLSHGTDVWLGNAQELIKTGICDLSSVIGCRDDIMVYLMYAGLEPSMAFKIMESVRKGKGLTEEMIETMKENEVPDWYLDSCLKIKYMFPKAHAAAYVLMAVRIAYFKVHHPLYYYASYFTIRASDFDLITMIKDKTSIRNTVKDMYSRYMDLGKKEKDVLTVLEIMNEMAHRGYRMQPISLEKSQAFEFIIEGDTLIPPFISVPGLGENVAKRIVEARDDGPFLSKEDLNKKAGLSQKIIEYLDELGSLPNLPDKAQLSIFDM</sequence>
<reference key="1">
    <citation type="journal article" date="2001" name="Lancet">
        <title>Whole genome sequencing of meticillin-resistant Staphylococcus aureus.</title>
        <authorList>
            <person name="Kuroda M."/>
            <person name="Ohta T."/>
            <person name="Uchiyama I."/>
            <person name="Baba T."/>
            <person name="Yuzawa H."/>
            <person name="Kobayashi I."/>
            <person name="Cui L."/>
            <person name="Oguchi A."/>
            <person name="Aoki K."/>
            <person name="Nagai Y."/>
            <person name="Lian J.-Q."/>
            <person name="Ito T."/>
            <person name="Kanamori M."/>
            <person name="Matsumaru H."/>
            <person name="Maruyama A."/>
            <person name="Murakami H."/>
            <person name="Hosoyama A."/>
            <person name="Mizutani-Ui Y."/>
            <person name="Takahashi N.K."/>
            <person name="Sawano T."/>
            <person name="Inoue R."/>
            <person name="Kaito C."/>
            <person name="Sekimizu K."/>
            <person name="Hirakawa H."/>
            <person name="Kuhara S."/>
            <person name="Goto S."/>
            <person name="Yabuzaki J."/>
            <person name="Kanehisa M."/>
            <person name="Yamashita A."/>
            <person name="Oshima K."/>
            <person name="Furuya K."/>
            <person name="Yoshino C."/>
            <person name="Shiba T."/>
            <person name="Hattori M."/>
            <person name="Ogasawara N."/>
            <person name="Hayashi H."/>
            <person name="Hiramatsu K."/>
        </authorList>
    </citation>
    <scope>NUCLEOTIDE SEQUENCE [LARGE SCALE GENOMIC DNA]</scope>
    <source>
        <strain>N315</strain>
    </source>
</reference>
<reference key="2">
    <citation type="submission" date="2007-10" db="UniProtKB">
        <title>Shotgun proteomic analysis of total and membrane protein extracts of S. aureus strain N315.</title>
        <authorList>
            <person name="Vaezzadeh A.R."/>
            <person name="Deshusses J."/>
            <person name="Lescuyer P."/>
            <person name="Hochstrasser D.F."/>
        </authorList>
    </citation>
    <scope>IDENTIFICATION BY MASS SPECTROMETRY [LARGE SCALE ANALYSIS]</scope>
    <source>
        <strain>N315</strain>
    </source>
</reference>
<accession>P63982</accession>
<accession>Q99UK8</accession>
<name>DPO3_STAAN</name>